<reference key="1">
    <citation type="journal article" date="2009" name="PLoS ONE">
        <title>Non mycobacterial virulence genes in the genome of the emerging pathogen Mycobacterium abscessus.</title>
        <authorList>
            <person name="Ripoll F."/>
            <person name="Pasek S."/>
            <person name="Schenowitz C."/>
            <person name="Dossat C."/>
            <person name="Barbe V."/>
            <person name="Rottman M."/>
            <person name="Macheras E."/>
            <person name="Heym B."/>
            <person name="Herrmann J.L."/>
            <person name="Daffe M."/>
            <person name="Brosch R."/>
            <person name="Risler J.L."/>
            <person name="Gaillard J.L."/>
        </authorList>
    </citation>
    <scope>NUCLEOTIDE SEQUENCE [LARGE SCALE GENOMIC DNA]</scope>
    <source>
        <strain>ATCC 19977 / DSM 44196 / CCUG 20993 / CIP 104536 / JCM 13569 / NCTC 13031 / TMC 1543 / L948</strain>
    </source>
</reference>
<sequence length="432" mass="47621">MTAQPEIHLMAGGQDWDEIVTAAGQATDERIVVNMGPQHPSTHGVLRLILEIEGETVTDVRCGIGYLHTGIEKNLEYRTWTQGVTFVTRMDYLSPFFNETAYCLGVEQLLGIADEIPERANVIRVLMMELNRISSHLVALATGGMELGAMTAMFLGFREREMILKVFEAITGLRMNHAYVRPGGLAQDLPDGAEQEVRDLLEILPGRLRDMENLLNENYIWKARTQGVGYLDLTGCMALGITGPVLRATGLAHDLRRAQPYCGYENYDFDVVTHQDCDSYGRYLIRVKEMHESIKIAQQCVDRLRPGPVMVDDKKIAWPADLASGPDGLGNSPKHIAKIMGTSMEGLIHHFKLVTEGVRVPAGQVYVAIESPRGELGVHMVSDGGTRPYRVHFRDPSFTNLQSVAAMCEGAMVADLIAAVASIDPVMGGVDR</sequence>
<organism>
    <name type="scientific">Mycobacteroides abscessus (strain ATCC 19977 / DSM 44196 / CCUG 20993 / CIP 104536 / JCM 13569 / NCTC 13031 / TMC 1543 / L948)</name>
    <name type="common">Mycobacterium abscessus</name>
    <dbReference type="NCBI Taxonomy" id="561007"/>
    <lineage>
        <taxon>Bacteria</taxon>
        <taxon>Bacillati</taxon>
        <taxon>Actinomycetota</taxon>
        <taxon>Actinomycetes</taxon>
        <taxon>Mycobacteriales</taxon>
        <taxon>Mycobacteriaceae</taxon>
        <taxon>Mycobacteroides</taxon>
        <taxon>Mycobacteroides abscessus</taxon>
    </lineage>
</organism>
<dbReference type="EC" id="7.1.1.-" evidence="1"/>
<dbReference type="EMBL" id="CU458896">
    <property type="protein sequence ID" value="CAM62218.1"/>
    <property type="molecule type" value="Genomic_DNA"/>
</dbReference>
<dbReference type="RefSeq" id="WP_005080148.1">
    <property type="nucleotide sequence ID" value="NZ_MLCG01000002.1"/>
</dbReference>
<dbReference type="SMR" id="B1MPG7"/>
<dbReference type="GeneID" id="93379073"/>
<dbReference type="KEGG" id="mab:MAB_2137"/>
<dbReference type="Proteomes" id="UP000007137">
    <property type="component" value="Chromosome"/>
</dbReference>
<dbReference type="GO" id="GO:0005886">
    <property type="term" value="C:plasma membrane"/>
    <property type="evidence" value="ECO:0007669"/>
    <property type="project" value="UniProtKB-SubCell"/>
</dbReference>
<dbReference type="GO" id="GO:0051287">
    <property type="term" value="F:NAD binding"/>
    <property type="evidence" value="ECO:0007669"/>
    <property type="project" value="InterPro"/>
</dbReference>
<dbReference type="GO" id="GO:0050136">
    <property type="term" value="F:NADH:ubiquinone reductase (non-electrogenic) activity"/>
    <property type="evidence" value="ECO:0007669"/>
    <property type="project" value="UniProtKB-UniRule"/>
</dbReference>
<dbReference type="GO" id="GO:0048038">
    <property type="term" value="F:quinone binding"/>
    <property type="evidence" value="ECO:0007669"/>
    <property type="project" value="UniProtKB-KW"/>
</dbReference>
<dbReference type="Gene3D" id="1.10.645.10">
    <property type="entry name" value="Cytochrome-c3 Hydrogenase, chain B"/>
    <property type="match status" value="1"/>
</dbReference>
<dbReference type="HAMAP" id="MF_01358">
    <property type="entry name" value="NDH1_NuoD"/>
    <property type="match status" value="1"/>
</dbReference>
<dbReference type="InterPro" id="IPR001135">
    <property type="entry name" value="NADH_Q_OxRdtase_suD"/>
</dbReference>
<dbReference type="InterPro" id="IPR014029">
    <property type="entry name" value="NADH_UbQ_OxRdtase_49kDa_CS"/>
</dbReference>
<dbReference type="InterPro" id="IPR022885">
    <property type="entry name" value="NDH1_su_D/H"/>
</dbReference>
<dbReference type="InterPro" id="IPR029014">
    <property type="entry name" value="NiFe-Hase_large"/>
</dbReference>
<dbReference type="NCBIfam" id="TIGR01962">
    <property type="entry name" value="NuoD"/>
    <property type="match status" value="1"/>
</dbReference>
<dbReference type="NCBIfam" id="NF004739">
    <property type="entry name" value="PRK06075.1"/>
    <property type="match status" value="1"/>
</dbReference>
<dbReference type="PANTHER" id="PTHR11993:SF10">
    <property type="entry name" value="NADH DEHYDROGENASE [UBIQUINONE] IRON-SULFUR PROTEIN 2, MITOCHONDRIAL"/>
    <property type="match status" value="1"/>
</dbReference>
<dbReference type="PANTHER" id="PTHR11993">
    <property type="entry name" value="NADH-UBIQUINONE OXIDOREDUCTASE 49 KDA SUBUNIT"/>
    <property type="match status" value="1"/>
</dbReference>
<dbReference type="Pfam" id="PF00346">
    <property type="entry name" value="Complex1_49kDa"/>
    <property type="match status" value="1"/>
</dbReference>
<dbReference type="SUPFAM" id="SSF56762">
    <property type="entry name" value="HydB/Nqo4-like"/>
    <property type="match status" value="1"/>
</dbReference>
<dbReference type="PROSITE" id="PS00535">
    <property type="entry name" value="COMPLEX1_49K"/>
    <property type="match status" value="1"/>
</dbReference>
<comment type="function">
    <text evidence="1">NDH-1 shuttles electrons from NADH, via FMN and iron-sulfur (Fe-S) centers, to quinones in the respiratory chain. The immediate electron acceptor for the enzyme in this species is believed to be a menaquinone. Couples the redox reaction to proton translocation (for every two electrons transferred, four hydrogen ions are translocated across the cytoplasmic membrane), and thus conserves the redox energy in a proton gradient.</text>
</comment>
<comment type="catalytic activity">
    <reaction evidence="1">
        <text>a quinone + NADH + 5 H(+)(in) = a quinol + NAD(+) + 4 H(+)(out)</text>
        <dbReference type="Rhea" id="RHEA:57888"/>
        <dbReference type="ChEBI" id="CHEBI:15378"/>
        <dbReference type="ChEBI" id="CHEBI:24646"/>
        <dbReference type="ChEBI" id="CHEBI:57540"/>
        <dbReference type="ChEBI" id="CHEBI:57945"/>
        <dbReference type="ChEBI" id="CHEBI:132124"/>
    </reaction>
</comment>
<comment type="subunit">
    <text evidence="1">NDH-1 is composed of 14 different subunits. Subunits NuoB, C, D, E, F, and G constitute the peripheral sector of the complex.</text>
</comment>
<comment type="subcellular location">
    <subcellularLocation>
        <location evidence="1">Cell membrane</location>
        <topology evidence="1">Peripheral membrane protein</topology>
        <orientation evidence="1">Cytoplasmic side</orientation>
    </subcellularLocation>
</comment>
<comment type="similarity">
    <text evidence="1">Belongs to the complex I 49 kDa subunit family.</text>
</comment>
<name>NUOD_MYCA9</name>
<feature type="chain" id="PRO_0000357852" description="NADH-quinone oxidoreductase subunit D">
    <location>
        <begin position="1"/>
        <end position="432"/>
    </location>
</feature>
<evidence type="ECO:0000255" key="1">
    <source>
        <dbReference type="HAMAP-Rule" id="MF_01358"/>
    </source>
</evidence>
<gene>
    <name evidence="1" type="primary">nuoD</name>
    <name type="ordered locus">MAB_2137</name>
</gene>
<accession>B1MPG7</accession>
<protein>
    <recommendedName>
        <fullName evidence="1">NADH-quinone oxidoreductase subunit D</fullName>
        <ecNumber evidence="1">7.1.1.-</ecNumber>
    </recommendedName>
    <alternativeName>
        <fullName evidence="1">NADH dehydrogenase I subunit D</fullName>
    </alternativeName>
    <alternativeName>
        <fullName evidence="1">NDH-1 subunit D</fullName>
    </alternativeName>
</protein>
<keyword id="KW-1003">Cell membrane</keyword>
<keyword id="KW-0472">Membrane</keyword>
<keyword id="KW-0520">NAD</keyword>
<keyword id="KW-0874">Quinone</keyword>
<keyword id="KW-1185">Reference proteome</keyword>
<keyword id="KW-1278">Translocase</keyword>
<keyword id="KW-0813">Transport</keyword>
<proteinExistence type="inferred from homology"/>